<evidence type="ECO:0000256" key="1">
    <source>
        <dbReference type="SAM" id="MobiDB-lite"/>
    </source>
</evidence>
<evidence type="ECO:0000305" key="2"/>
<reference key="1">
    <citation type="journal article" date="1990" name="Plant Mol. Biol.">
        <title>The b-32 protein from maize endosperm: characterization of genomic sequences encoding two alternative central domains.</title>
        <authorList>
            <person name="Hartings H."/>
            <person name="Lazzaroni N."/>
            <person name="Marsan P.A."/>
            <person name="Aragay A."/>
            <person name="Thompson R."/>
            <person name="Salamini F."/>
            <person name="di Fonzo N."/>
            <person name="Palau J."/>
            <person name="Motto M."/>
        </authorList>
    </citation>
    <scope>NUCLEOTIDE SEQUENCE [MRNA]</scope>
</reference>
<reference key="2">
    <citation type="journal article" date="1988" name="Mol. Gen. Genet.">
        <title>The b-32 protein from maize endosperm, an albumin regulated by the O2 locus: nucleic acid (cDNA) and amino acid sequences.</title>
        <authorList>
            <person name="di Fonzo N."/>
            <person name="Hartings H."/>
            <person name="Brembilla M."/>
            <person name="Motto M."/>
            <person name="Soave C."/>
            <person name="Navarro E."/>
            <person name="Palau J."/>
            <person name="Rhode W."/>
            <person name="Salamini F."/>
        </authorList>
    </citation>
    <scope>NUCLEOTIDE SEQUENCE [MRNA]</scope>
    <source>
        <tissue>Endosperm</tissue>
    </source>
</reference>
<accession>P10593</accession>
<proteinExistence type="evidence at transcript level"/>
<name>ALB3_MAIZE</name>
<keyword id="KW-0963">Cytoplasm</keyword>
<keyword id="KW-0378">Hydrolase</keyword>
<keyword id="KW-0611">Plant defense</keyword>
<keyword id="KW-0652">Protein synthesis inhibitor</keyword>
<keyword id="KW-1185">Reference proteome</keyword>
<keyword id="KW-0800">Toxin</keyword>
<gene>
    <name type="primary">O6</name>
</gene>
<organism>
    <name type="scientific">Zea mays</name>
    <name type="common">Maize</name>
    <dbReference type="NCBI Taxonomy" id="4577"/>
    <lineage>
        <taxon>Eukaryota</taxon>
        <taxon>Viridiplantae</taxon>
        <taxon>Streptophyta</taxon>
        <taxon>Embryophyta</taxon>
        <taxon>Tracheophyta</taxon>
        <taxon>Spermatophyta</taxon>
        <taxon>Magnoliopsida</taxon>
        <taxon>Liliopsida</taxon>
        <taxon>Poales</taxon>
        <taxon>Poaceae</taxon>
        <taxon>PACMAD clade</taxon>
        <taxon>Panicoideae</taxon>
        <taxon>Andropogonodae</taxon>
        <taxon>Andropogoneae</taxon>
        <taxon>Tripsacinae</taxon>
        <taxon>Zea</taxon>
    </lineage>
</organism>
<protein>
    <recommendedName>
        <fullName>Albumin b-32</fullName>
        <ecNumber>3.2.2.22</ecNumber>
    </recommendedName>
    <alternativeName>
        <fullName>Protein opaque-6</fullName>
    </alternativeName>
    <alternativeName>
        <fullName>rRNA N-glycosidase</fullName>
    </alternativeName>
</protein>
<feature type="chain" id="PRO_0000221403" description="Albumin b-32">
    <location>
        <begin position="1"/>
        <end position="303"/>
    </location>
</feature>
<feature type="region of interest" description="Disordered" evidence="1">
    <location>
        <begin position="112"/>
        <end position="175"/>
    </location>
</feature>
<feature type="compositionally biased region" description="Low complexity" evidence="1">
    <location>
        <begin position="112"/>
        <end position="137"/>
    </location>
</feature>
<feature type="compositionally biased region" description="Basic and acidic residues" evidence="1">
    <location>
        <begin position="146"/>
        <end position="156"/>
    </location>
</feature>
<feature type="sequence conflict" description="In Ref. 2; CAA30797." evidence="2" ref="2">
    <original>D</original>
    <variation>N</variation>
    <location>
        <position position="269"/>
    </location>
</feature>
<comment type="function">
    <text>A possible regulatory factor for the synthesis of zeins, the major group of storage proteins.</text>
</comment>
<comment type="catalytic activity">
    <reaction>
        <text>Endohydrolysis of the N-glycosidic bond at one specific adenosine on the 28S rRNA.</text>
        <dbReference type="EC" id="3.2.2.22"/>
    </reaction>
</comment>
<comment type="subunit">
    <text>Monomer.</text>
</comment>
<comment type="subcellular location">
    <subcellularLocation>
        <location>Cytoplasm</location>
    </subcellularLocation>
</comment>
<comment type="tissue specificity">
    <text>Endosperm.</text>
</comment>
<comment type="similarity">
    <text evidence="2">Belongs to the ribosome-inactivating protein family. Type 1 RIP subfamily.</text>
</comment>
<dbReference type="EC" id="3.2.2.22"/>
<dbReference type="EMBL" id="X54212">
    <property type="protein sequence ID" value="CAA38124.1"/>
    <property type="molecule type" value="mRNA"/>
</dbReference>
<dbReference type="EMBL" id="X07987">
    <property type="protein sequence ID" value="CAA30797.1"/>
    <property type="molecule type" value="mRNA"/>
</dbReference>
<dbReference type="PIR" id="S03172">
    <property type="entry name" value="S03172"/>
</dbReference>
<dbReference type="RefSeq" id="NP_001105428.1">
    <property type="nucleotide sequence ID" value="NM_001111958.1"/>
</dbReference>
<dbReference type="SMR" id="P10593"/>
<dbReference type="FunCoup" id="P10593">
    <property type="interactions" value="12"/>
</dbReference>
<dbReference type="STRING" id="4577.P10593"/>
<dbReference type="MaizeGDB" id="30000"/>
<dbReference type="InParanoid" id="P10593"/>
<dbReference type="Proteomes" id="UP000007305">
    <property type="component" value="Unplaced"/>
</dbReference>
<dbReference type="ExpressionAtlas" id="P10593">
    <property type="expression patterns" value="baseline and differential"/>
</dbReference>
<dbReference type="GO" id="GO:0005737">
    <property type="term" value="C:cytoplasm"/>
    <property type="evidence" value="ECO:0007669"/>
    <property type="project" value="UniProtKB-SubCell"/>
</dbReference>
<dbReference type="GO" id="GO:0030598">
    <property type="term" value="F:rRNA N-glycosylase activity"/>
    <property type="evidence" value="ECO:0007669"/>
    <property type="project" value="UniProtKB-EC"/>
</dbReference>
<dbReference type="GO" id="GO:0090729">
    <property type="term" value="F:toxin activity"/>
    <property type="evidence" value="ECO:0007669"/>
    <property type="project" value="UniProtKB-KW"/>
</dbReference>
<dbReference type="GO" id="GO:0006952">
    <property type="term" value="P:defense response"/>
    <property type="evidence" value="ECO:0007669"/>
    <property type="project" value="UniProtKB-KW"/>
</dbReference>
<dbReference type="GO" id="GO:0017148">
    <property type="term" value="P:negative regulation of translation"/>
    <property type="evidence" value="ECO:0007669"/>
    <property type="project" value="UniProtKB-KW"/>
</dbReference>
<dbReference type="Gene3D" id="3.40.420.10">
    <property type="entry name" value="Ricin (A subunit), domain 1"/>
    <property type="match status" value="1"/>
</dbReference>
<dbReference type="Gene3D" id="4.10.470.10">
    <property type="entry name" value="Ricin (A Subunit), domain 2"/>
    <property type="match status" value="1"/>
</dbReference>
<dbReference type="InterPro" id="IPR036041">
    <property type="entry name" value="Ribosome-inact_prot_sf"/>
</dbReference>
<dbReference type="InterPro" id="IPR017989">
    <property type="entry name" value="Ribosome_inactivat_1/2"/>
</dbReference>
<dbReference type="InterPro" id="IPR001574">
    <property type="entry name" value="Ribosome_inactivat_prot"/>
</dbReference>
<dbReference type="InterPro" id="IPR017988">
    <property type="entry name" value="Ribosome_inactivat_prot_CS"/>
</dbReference>
<dbReference type="InterPro" id="IPR016138">
    <property type="entry name" value="Ribosome_inactivat_prot_sub1"/>
</dbReference>
<dbReference type="InterPro" id="IPR016139">
    <property type="entry name" value="Ribosome_inactivat_prot_sub2"/>
</dbReference>
<dbReference type="PANTHER" id="PTHR33453">
    <property type="match status" value="1"/>
</dbReference>
<dbReference type="PANTHER" id="PTHR33453:SF9">
    <property type="entry name" value="ALBUMIN B-32"/>
    <property type="match status" value="1"/>
</dbReference>
<dbReference type="Pfam" id="PF00161">
    <property type="entry name" value="RIP"/>
    <property type="match status" value="1"/>
</dbReference>
<dbReference type="PRINTS" id="PR00396">
    <property type="entry name" value="SHIGARICIN"/>
</dbReference>
<dbReference type="SUPFAM" id="SSF56371">
    <property type="entry name" value="Ribosome inactivating proteins (RIP)"/>
    <property type="match status" value="1"/>
</dbReference>
<dbReference type="PROSITE" id="PS00275">
    <property type="entry name" value="SHIGA_RICIN"/>
    <property type="match status" value="1"/>
</dbReference>
<sequence>MAETNPELSDLMAQTNKKIVPKFTEIFPVEDVNYPYSAFIASVRKDVIKHCTDHKGIFQPVLPPEKKVPELWFYTELKTRTSSITLAIRMDNLYLVGFRTPGGVWWELARPATPTSSATTPGGSASAAGTRTSSATRVWRPSPWAARDDQGRQRPGEEEEDGDTGGGGGADADADAGGAELAAAAAAADPQADTKSKLVKLVVMVCEGLRFNTLSRTVDAGFNSQHGVTLTVTQGKQVQKWDRISKAAFEWADHPTAVIPDMQKLGIKDKNEAARIVALVKNQTTAAAAAATAASADNDDDEA</sequence>